<keyword id="KW-0963">Cytoplasm</keyword>
<keyword id="KW-0539">Nucleus</keyword>
<keyword id="KW-1185">Reference proteome</keyword>
<feature type="chain" id="PRO_0000304021" description="Uncharacterized protein C630.07c">
    <location>
        <begin position="1"/>
        <end position="430"/>
    </location>
</feature>
<proteinExistence type="predicted"/>
<protein>
    <recommendedName>
        <fullName>Uncharacterized protein C630.07c</fullName>
    </recommendedName>
</protein>
<reference key="1">
    <citation type="journal article" date="2002" name="Nature">
        <title>The genome sequence of Schizosaccharomyces pombe.</title>
        <authorList>
            <person name="Wood V."/>
            <person name="Gwilliam R."/>
            <person name="Rajandream M.A."/>
            <person name="Lyne M.H."/>
            <person name="Lyne R."/>
            <person name="Stewart A."/>
            <person name="Sgouros J.G."/>
            <person name="Peat N."/>
            <person name="Hayles J."/>
            <person name="Baker S.G."/>
            <person name="Basham D."/>
            <person name="Bowman S."/>
            <person name="Brooks K."/>
            <person name="Brown D."/>
            <person name="Brown S."/>
            <person name="Chillingworth T."/>
            <person name="Churcher C.M."/>
            <person name="Collins M."/>
            <person name="Connor R."/>
            <person name="Cronin A."/>
            <person name="Davis P."/>
            <person name="Feltwell T."/>
            <person name="Fraser A."/>
            <person name="Gentles S."/>
            <person name="Goble A."/>
            <person name="Hamlin N."/>
            <person name="Harris D.E."/>
            <person name="Hidalgo J."/>
            <person name="Hodgson G."/>
            <person name="Holroyd S."/>
            <person name="Hornsby T."/>
            <person name="Howarth S."/>
            <person name="Huckle E.J."/>
            <person name="Hunt S."/>
            <person name="Jagels K."/>
            <person name="James K.D."/>
            <person name="Jones L."/>
            <person name="Jones M."/>
            <person name="Leather S."/>
            <person name="McDonald S."/>
            <person name="McLean J."/>
            <person name="Mooney P."/>
            <person name="Moule S."/>
            <person name="Mungall K.L."/>
            <person name="Murphy L.D."/>
            <person name="Niblett D."/>
            <person name="Odell C."/>
            <person name="Oliver K."/>
            <person name="O'Neil S."/>
            <person name="Pearson D."/>
            <person name="Quail M.A."/>
            <person name="Rabbinowitsch E."/>
            <person name="Rutherford K.M."/>
            <person name="Rutter S."/>
            <person name="Saunders D."/>
            <person name="Seeger K."/>
            <person name="Sharp S."/>
            <person name="Skelton J."/>
            <person name="Simmonds M.N."/>
            <person name="Squares R."/>
            <person name="Squares S."/>
            <person name="Stevens K."/>
            <person name="Taylor K."/>
            <person name="Taylor R.G."/>
            <person name="Tivey A."/>
            <person name="Walsh S.V."/>
            <person name="Warren T."/>
            <person name="Whitehead S."/>
            <person name="Woodward J.R."/>
            <person name="Volckaert G."/>
            <person name="Aert R."/>
            <person name="Robben J."/>
            <person name="Grymonprez B."/>
            <person name="Weltjens I."/>
            <person name="Vanstreels E."/>
            <person name="Rieger M."/>
            <person name="Schaefer M."/>
            <person name="Mueller-Auer S."/>
            <person name="Gabel C."/>
            <person name="Fuchs M."/>
            <person name="Duesterhoeft A."/>
            <person name="Fritzc C."/>
            <person name="Holzer E."/>
            <person name="Moestl D."/>
            <person name="Hilbert H."/>
            <person name="Borzym K."/>
            <person name="Langer I."/>
            <person name="Beck A."/>
            <person name="Lehrach H."/>
            <person name="Reinhardt R."/>
            <person name="Pohl T.M."/>
            <person name="Eger P."/>
            <person name="Zimmermann W."/>
            <person name="Wedler H."/>
            <person name="Wambutt R."/>
            <person name="Purnelle B."/>
            <person name="Goffeau A."/>
            <person name="Cadieu E."/>
            <person name="Dreano S."/>
            <person name="Gloux S."/>
            <person name="Lelaure V."/>
            <person name="Mottier S."/>
            <person name="Galibert F."/>
            <person name="Aves S.J."/>
            <person name="Xiang Z."/>
            <person name="Hunt C."/>
            <person name="Moore K."/>
            <person name="Hurst S.M."/>
            <person name="Lucas M."/>
            <person name="Rochet M."/>
            <person name="Gaillardin C."/>
            <person name="Tallada V.A."/>
            <person name="Garzon A."/>
            <person name="Thode G."/>
            <person name="Daga R.R."/>
            <person name="Cruzado L."/>
            <person name="Jimenez J."/>
            <person name="Sanchez M."/>
            <person name="del Rey F."/>
            <person name="Benito J."/>
            <person name="Dominguez A."/>
            <person name="Revuelta J.L."/>
            <person name="Moreno S."/>
            <person name="Armstrong J."/>
            <person name="Forsburg S.L."/>
            <person name="Cerutti L."/>
            <person name="Lowe T."/>
            <person name="McCombie W.R."/>
            <person name="Paulsen I."/>
            <person name="Potashkin J."/>
            <person name="Shpakovski G.V."/>
            <person name="Ussery D."/>
            <person name="Barrell B.G."/>
            <person name="Nurse P."/>
        </authorList>
    </citation>
    <scope>NUCLEOTIDE SEQUENCE [LARGE SCALE GENOMIC DNA]</scope>
    <source>
        <strain>972 / ATCC 24843</strain>
    </source>
</reference>
<reference key="2">
    <citation type="journal article" date="2006" name="Nat. Biotechnol.">
        <title>ORFeome cloning and global analysis of protein localization in the fission yeast Schizosaccharomyces pombe.</title>
        <authorList>
            <person name="Matsuyama A."/>
            <person name="Arai R."/>
            <person name="Yashiroda Y."/>
            <person name="Shirai A."/>
            <person name="Kamata A."/>
            <person name="Sekido S."/>
            <person name="Kobayashi Y."/>
            <person name="Hashimoto A."/>
            <person name="Hamamoto M."/>
            <person name="Hiraoka Y."/>
            <person name="Horinouchi S."/>
            <person name="Yoshida M."/>
        </authorList>
    </citation>
    <scope>SUBCELLULAR LOCATION [LARGE SCALE ANALYSIS]</scope>
</reference>
<comment type="subcellular location">
    <subcellularLocation>
        <location evidence="1">Cytoplasm</location>
    </subcellularLocation>
    <subcellularLocation>
        <location evidence="1">Nucleus</location>
    </subcellularLocation>
</comment>
<dbReference type="EMBL" id="CU329670">
    <property type="protein sequence ID" value="CAB52729.1"/>
    <property type="molecule type" value="Genomic_DNA"/>
</dbReference>
<dbReference type="PIR" id="T38985">
    <property type="entry name" value="T38985"/>
</dbReference>
<dbReference type="RefSeq" id="NP_592902.1">
    <property type="nucleotide sequence ID" value="NM_001018302.2"/>
</dbReference>
<dbReference type="BioGRID" id="279792">
    <property type="interactions" value="5"/>
</dbReference>
<dbReference type="STRING" id="284812.Q9UUH5"/>
<dbReference type="iPTMnet" id="Q9UUH5"/>
<dbReference type="PaxDb" id="4896-SPAC630.07c.1"/>
<dbReference type="EnsemblFungi" id="SPAC630.07c.1">
    <property type="protein sequence ID" value="SPAC630.07c.1:pep"/>
    <property type="gene ID" value="SPAC630.07c"/>
</dbReference>
<dbReference type="KEGG" id="spo:2543370"/>
<dbReference type="PomBase" id="SPAC630.07c"/>
<dbReference type="VEuPathDB" id="FungiDB:SPAC630.07c"/>
<dbReference type="eggNOG" id="ENOG502SFH8">
    <property type="taxonomic scope" value="Eukaryota"/>
</dbReference>
<dbReference type="HOGENOM" id="CLU_638027_0_0_1"/>
<dbReference type="InParanoid" id="Q9UUH5"/>
<dbReference type="OMA" id="WDICPES"/>
<dbReference type="PRO" id="PR:Q9UUH5"/>
<dbReference type="Proteomes" id="UP000002485">
    <property type="component" value="Chromosome I"/>
</dbReference>
<dbReference type="GO" id="GO:0005829">
    <property type="term" value="C:cytosol"/>
    <property type="evidence" value="ECO:0007005"/>
    <property type="project" value="PomBase"/>
</dbReference>
<dbReference type="GO" id="GO:0005634">
    <property type="term" value="C:nucleus"/>
    <property type="evidence" value="ECO:0007005"/>
    <property type="project" value="PomBase"/>
</dbReference>
<evidence type="ECO:0000269" key="1">
    <source>
    </source>
</evidence>
<organism>
    <name type="scientific">Schizosaccharomyces pombe (strain 972 / ATCC 24843)</name>
    <name type="common">Fission yeast</name>
    <dbReference type="NCBI Taxonomy" id="284812"/>
    <lineage>
        <taxon>Eukaryota</taxon>
        <taxon>Fungi</taxon>
        <taxon>Dikarya</taxon>
        <taxon>Ascomycota</taxon>
        <taxon>Taphrinomycotina</taxon>
        <taxon>Schizosaccharomycetes</taxon>
        <taxon>Schizosaccharomycetales</taxon>
        <taxon>Schizosaccharomycetaceae</taxon>
        <taxon>Schizosaccharomyces</taxon>
    </lineage>
</organism>
<sequence>MDQYRDLPKEDPDTAIEYESGVDEESSLKIEKFRVLIFGKDNSQDDLVKSVFNLSKLSEKEKMPFGIKCESEENPNFESYHSKVGKKSCKRFMRWLKANAFAEERDIDCIWYQLNLLDISDEDILCLQYLQGCLIPIVSIIYDFNEFLSPFTKSFLSKIGESNTITVKGMPLADVLVFRKKVLKLVSQLSFMTDRKELVYTTCLALEDDDAYTNFVSAQQEDSSCKFYGGILIGVSHCKYAAAGASYPLPIPASGLLAQKLAIGLLCKDIIKLWNLCPESSILTKEILLELPKASDVAKSIGKMILTSMFVPLWLLKGIWEAPATAKIIIGSIADVTLPVQRMYYFIKAGGKLDVPTIHAFYQHYKEFVRPKCLEHIAEITTFNVVTAFSSEAVYQEAIRLLDRFRYVSKSSEEDLIVPSFVVNDLITYD</sequence>
<name>YKI7_SCHPO</name>
<gene>
    <name type="ORF">SPAC630.07c</name>
</gene>
<accession>Q9UUH5</accession>